<accession>A1VN15</accession>
<comment type="function">
    <text evidence="1">Involved in the heme biosynthesis. Catalyzes the aerobic oxidative decarboxylation of propionate groups of rings A and B of coproporphyrinogen-III to yield the vinyl groups in protoporphyrinogen-IX.</text>
</comment>
<comment type="catalytic activity">
    <reaction evidence="1">
        <text>coproporphyrinogen III + O2 + 2 H(+) = protoporphyrinogen IX + 2 CO2 + 2 H2O</text>
        <dbReference type="Rhea" id="RHEA:18257"/>
        <dbReference type="ChEBI" id="CHEBI:15377"/>
        <dbReference type="ChEBI" id="CHEBI:15378"/>
        <dbReference type="ChEBI" id="CHEBI:15379"/>
        <dbReference type="ChEBI" id="CHEBI:16526"/>
        <dbReference type="ChEBI" id="CHEBI:57307"/>
        <dbReference type="ChEBI" id="CHEBI:57309"/>
        <dbReference type="EC" id="1.3.3.3"/>
    </reaction>
</comment>
<comment type="cofactor">
    <cofactor evidence="1">
        <name>a divalent metal cation</name>
        <dbReference type="ChEBI" id="CHEBI:60240"/>
    </cofactor>
</comment>
<comment type="pathway">
    <text evidence="1">Porphyrin-containing compound metabolism; protoporphyrin-IX biosynthesis; protoporphyrinogen-IX from coproporphyrinogen-III (O2 route): step 1/1.</text>
</comment>
<comment type="subunit">
    <text evidence="1">Homodimer.</text>
</comment>
<comment type="subcellular location">
    <subcellularLocation>
        <location evidence="1">Cytoplasm</location>
    </subcellularLocation>
</comment>
<comment type="similarity">
    <text evidence="1">Belongs to the aerobic coproporphyrinogen-III oxidase family.</text>
</comment>
<feature type="chain" id="PRO_1000019474" description="Oxygen-dependent coproporphyrinogen-III oxidase">
    <location>
        <begin position="1"/>
        <end position="307"/>
    </location>
</feature>
<feature type="region of interest" description="Important for dimerization" evidence="1">
    <location>
        <begin position="247"/>
        <end position="282"/>
    </location>
</feature>
<feature type="active site" description="Proton donor" evidence="1">
    <location>
        <position position="111"/>
    </location>
</feature>
<feature type="binding site" evidence="1">
    <location>
        <position position="97"/>
    </location>
    <ligand>
        <name>substrate</name>
    </ligand>
</feature>
<feature type="binding site" evidence="1">
    <location>
        <position position="101"/>
    </location>
    <ligand>
        <name>a divalent metal cation</name>
        <dbReference type="ChEBI" id="CHEBI:60240"/>
    </ligand>
</feature>
<feature type="binding site" evidence="1">
    <location>
        <position position="111"/>
    </location>
    <ligand>
        <name>a divalent metal cation</name>
        <dbReference type="ChEBI" id="CHEBI:60240"/>
    </ligand>
</feature>
<feature type="binding site" evidence="1">
    <location>
        <begin position="113"/>
        <end position="115"/>
    </location>
    <ligand>
        <name>substrate</name>
    </ligand>
</feature>
<feature type="binding site" evidence="1">
    <location>
        <position position="152"/>
    </location>
    <ligand>
        <name>a divalent metal cation</name>
        <dbReference type="ChEBI" id="CHEBI:60240"/>
    </ligand>
</feature>
<feature type="binding site" evidence="1">
    <location>
        <position position="182"/>
    </location>
    <ligand>
        <name>a divalent metal cation</name>
        <dbReference type="ChEBI" id="CHEBI:60240"/>
    </ligand>
</feature>
<feature type="binding site" evidence="1">
    <location>
        <begin position="265"/>
        <end position="267"/>
    </location>
    <ligand>
        <name>substrate</name>
    </ligand>
</feature>
<feature type="site" description="Important for dimerization" evidence="1">
    <location>
        <position position="182"/>
    </location>
</feature>
<name>HEM6_POLNA</name>
<evidence type="ECO:0000255" key="1">
    <source>
        <dbReference type="HAMAP-Rule" id="MF_00333"/>
    </source>
</evidence>
<keyword id="KW-0963">Cytoplasm</keyword>
<keyword id="KW-0350">Heme biosynthesis</keyword>
<keyword id="KW-0479">Metal-binding</keyword>
<keyword id="KW-0560">Oxidoreductase</keyword>
<keyword id="KW-0627">Porphyrin biosynthesis</keyword>
<keyword id="KW-1185">Reference proteome</keyword>
<organism>
    <name type="scientific">Polaromonas naphthalenivorans (strain CJ2)</name>
    <dbReference type="NCBI Taxonomy" id="365044"/>
    <lineage>
        <taxon>Bacteria</taxon>
        <taxon>Pseudomonadati</taxon>
        <taxon>Pseudomonadota</taxon>
        <taxon>Betaproteobacteria</taxon>
        <taxon>Burkholderiales</taxon>
        <taxon>Comamonadaceae</taxon>
        <taxon>Polaromonas</taxon>
    </lineage>
</organism>
<dbReference type="EC" id="1.3.3.3" evidence="1"/>
<dbReference type="EMBL" id="CP000529">
    <property type="protein sequence ID" value="ABM37043.1"/>
    <property type="molecule type" value="Genomic_DNA"/>
</dbReference>
<dbReference type="RefSeq" id="WP_011801129.1">
    <property type="nucleotide sequence ID" value="NC_008781.1"/>
</dbReference>
<dbReference type="SMR" id="A1VN15"/>
<dbReference type="STRING" id="365044.Pnap_1730"/>
<dbReference type="KEGG" id="pna:Pnap_1730"/>
<dbReference type="eggNOG" id="COG0408">
    <property type="taxonomic scope" value="Bacteria"/>
</dbReference>
<dbReference type="HOGENOM" id="CLU_026169_0_1_4"/>
<dbReference type="OrthoDB" id="9777553at2"/>
<dbReference type="UniPathway" id="UPA00251">
    <property type="reaction ID" value="UER00322"/>
</dbReference>
<dbReference type="Proteomes" id="UP000000644">
    <property type="component" value="Chromosome"/>
</dbReference>
<dbReference type="GO" id="GO:0005737">
    <property type="term" value="C:cytoplasm"/>
    <property type="evidence" value="ECO:0007669"/>
    <property type="project" value="UniProtKB-SubCell"/>
</dbReference>
<dbReference type="GO" id="GO:0004109">
    <property type="term" value="F:coproporphyrinogen oxidase activity"/>
    <property type="evidence" value="ECO:0007669"/>
    <property type="project" value="UniProtKB-UniRule"/>
</dbReference>
<dbReference type="GO" id="GO:0046872">
    <property type="term" value="F:metal ion binding"/>
    <property type="evidence" value="ECO:0007669"/>
    <property type="project" value="UniProtKB-KW"/>
</dbReference>
<dbReference type="GO" id="GO:0042803">
    <property type="term" value="F:protein homodimerization activity"/>
    <property type="evidence" value="ECO:0000250"/>
    <property type="project" value="UniProtKB"/>
</dbReference>
<dbReference type="GO" id="GO:0006782">
    <property type="term" value="P:protoporphyrinogen IX biosynthetic process"/>
    <property type="evidence" value="ECO:0007669"/>
    <property type="project" value="UniProtKB-UniRule"/>
</dbReference>
<dbReference type="FunFam" id="3.40.1500.10:FF:000001">
    <property type="entry name" value="Oxygen-dependent coproporphyrinogen-III oxidase"/>
    <property type="match status" value="1"/>
</dbReference>
<dbReference type="Gene3D" id="3.40.1500.10">
    <property type="entry name" value="Coproporphyrinogen III oxidase, aerobic"/>
    <property type="match status" value="1"/>
</dbReference>
<dbReference type="HAMAP" id="MF_00333">
    <property type="entry name" value="Coprogen_oxidas"/>
    <property type="match status" value="1"/>
</dbReference>
<dbReference type="InterPro" id="IPR001260">
    <property type="entry name" value="Coprogen_oxidase_aer"/>
</dbReference>
<dbReference type="InterPro" id="IPR036406">
    <property type="entry name" value="Coprogen_oxidase_aer_sf"/>
</dbReference>
<dbReference type="InterPro" id="IPR018375">
    <property type="entry name" value="Coprogen_oxidase_CS"/>
</dbReference>
<dbReference type="NCBIfam" id="NF003727">
    <property type="entry name" value="PRK05330.1"/>
    <property type="match status" value="1"/>
</dbReference>
<dbReference type="PANTHER" id="PTHR10755">
    <property type="entry name" value="COPROPORPHYRINOGEN III OXIDASE, MITOCHONDRIAL"/>
    <property type="match status" value="1"/>
</dbReference>
<dbReference type="PANTHER" id="PTHR10755:SF0">
    <property type="entry name" value="OXYGEN-DEPENDENT COPROPORPHYRINOGEN-III OXIDASE, MITOCHONDRIAL"/>
    <property type="match status" value="1"/>
</dbReference>
<dbReference type="Pfam" id="PF01218">
    <property type="entry name" value="Coprogen_oxidas"/>
    <property type="match status" value="1"/>
</dbReference>
<dbReference type="PIRSF" id="PIRSF000166">
    <property type="entry name" value="Coproporphyri_ox"/>
    <property type="match status" value="1"/>
</dbReference>
<dbReference type="PRINTS" id="PR00073">
    <property type="entry name" value="COPRGNOXDASE"/>
</dbReference>
<dbReference type="SUPFAM" id="SSF102886">
    <property type="entry name" value="Coproporphyrinogen III oxidase"/>
    <property type="match status" value="1"/>
</dbReference>
<dbReference type="PROSITE" id="PS01021">
    <property type="entry name" value="COPROGEN_OXIDASE"/>
    <property type="match status" value="1"/>
</dbReference>
<proteinExistence type="inferred from homology"/>
<sequence>MSSIDLSTVRTFLLGLQERITHAIAEVDGQPFMTDHWQKEPGETLQGNGITKILEQGRVFERAGCGFSHVRGPRLPPSATQHRPELAGAAFEAMGVSLVFHPRNPYVPTVHMNVRMLAATPVGENCEPVCWFGGGMDLTPFYGFDEDAVHFHQVCKDSLKPFGDDKYPRFKQWCDEYFYLKHRQEQRGIGGVFFDDFQELGLAQSFAMMQSVGDSFLQAYLPIVERRKDSLFGERERDFQLYRRGRYVEFNLVWDRGTHFGLQSGGRTESILMSMPPLASWSYQRPNEAGSPEERLYKEFLVRRDWV</sequence>
<reference key="1">
    <citation type="journal article" date="2009" name="Environ. Microbiol.">
        <title>The genome of Polaromonas naphthalenivorans strain CJ2, isolated from coal tar-contaminated sediment, reveals physiological and metabolic versatility and evolution through extensive horizontal gene transfer.</title>
        <authorList>
            <person name="Yagi J.M."/>
            <person name="Sims D."/>
            <person name="Brettin T."/>
            <person name="Bruce D."/>
            <person name="Madsen E.L."/>
        </authorList>
    </citation>
    <scope>NUCLEOTIDE SEQUENCE [LARGE SCALE GENOMIC DNA]</scope>
    <source>
        <strain>CJ2</strain>
    </source>
</reference>
<protein>
    <recommendedName>
        <fullName evidence="1">Oxygen-dependent coproporphyrinogen-III oxidase</fullName>
        <shortName evidence="1">CPO</shortName>
        <shortName evidence="1">Coprogen oxidase</shortName>
        <shortName evidence="1">Coproporphyrinogenase</shortName>
        <ecNumber evidence="1">1.3.3.3</ecNumber>
    </recommendedName>
</protein>
<gene>
    <name evidence="1" type="primary">hemF</name>
    <name type="ordered locus">Pnap_1730</name>
</gene>